<organismHost>
    <name type="scientific">Ornithodoros</name>
    <name type="common">relapsing fever ticks</name>
    <dbReference type="NCBI Taxonomy" id="6937"/>
</organismHost>
<organismHost>
    <name type="scientific">Phacochoerus aethiopicus</name>
    <name type="common">Warthog</name>
    <dbReference type="NCBI Taxonomy" id="85517"/>
</organismHost>
<organismHost>
    <name type="scientific">Phacochoerus africanus</name>
    <name type="common">Warthog</name>
    <dbReference type="NCBI Taxonomy" id="41426"/>
</organismHost>
<organismHost>
    <name type="scientific">Potamochoerus larvatus</name>
    <name type="common">Bushpig</name>
    <dbReference type="NCBI Taxonomy" id="273792"/>
</organismHost>
<organismHost>
    <name type="scientific">Sus scrofa</name>
    <name type="common">Pig</name>
    <dbReference type="NCBI Taxonomy" id="9823"/>
</organismHost>
<protein>
    <recommendedName>
        <fullName evidence="2">Early transcription factor large subunit homolog</fullName>
    </recommendedName>
    <alternativeName>
        <fullName evidence="2">VETFL homolog</fullName>
    </alternativeName>
</protein>
<keyword id="KW-0804">Transcription</keyword>
<keyword id="KW-0805">Transcription regulation</keyword>
<keyword id="KW-0946">Virion</keyword>
<feature type="chain" id="PRO_0000373512" description="Early transcription factor large subunit homolog">
    <location>
        <begin position="1"/>
        <end position="1340"/>
    </location>
</feature>
<name>ETFL_ASFM2</name>
<evidence type="ECO:0000250" key="1">
    <source>
        <dbReference type="UniProtKB" id="P20636"/>
    </source>
</evidence>
<evidence type="ECO:0000250" key="2">
    <source>
        <dbReference type="UniProtKB" id="Q65177"/>
    </source>
</evidence>
<accession>P0CA41</accession>
<organism>
    <name type="scientific">African swine fever virus (isolate Tick/Malawi/Lil 20-1/1983)</name>
    <name type="common">ASFV</name>
    <dbReference type="NCBI Taxonomy" id="10500"/>
    <lineage>
        <taxon>Viruses</taxon>
        <taxon>Varidnaviria</taxon>
        <taxon>Bamfordvirae</taxon>
        <taxon>Nucleocytoviricota</taxon>
        <taxon>Pokkesviricetes</taxon>
        <taxon>Asfuvirales</taxon>
        <taxon>Asfarviridae</taxon>
        <taxon>Asfivirus</taxon>
        <taxon>African swine fever virus</taxon>
    </lineage>
</organism>
<reference key="1">
    <citation type="submission" date="2003-03" db="EMBL/GenBank/DDBJ databases">
        <title>African swine fever virus genomes.</title>
        <authorList>
            <person name="Kutish G.F."/>
            <person name="Rock D.L."/>
        </authorList>
    </citation>
    <scope>NUCLEOTIDE SEQUENCE [LARGE SCALE GENOMIC DNA]</scope>
</reference>
<dbReference type="EMBL" id="AY261361">
    <property type="status" value="NOT_ANNOTATED_CDS"/>
    <property type="molecule type" value="Genomic_DNA"/>
</dbReference>
<dbReference type="Proteomes" id="UP000000860">
    <property type="component" value="Segment"/>
</dbReference>
<dbReference type="GO" id="GO:0044423">
    <property type="term" value="C:virion component"/>
    <property type="evidence" value="ECO:0007669"/>
    <property type="project" value="UniProtKB-KW"/>
</dbReference>
<dbReference type="CDD" id="cd17039">
    <property type="entry name" value="Ubl_ubiquitin_like"/>
    <property type="match status" value="1"/>
</dbReference>
<comment type="function">
    <text evidence="1">Putative initation factor.</text>
</comment>
<comment type="subcellular location">
    <subcellularLocation>
        <location evidence="2">Virion</location>
    </subcellularLocation>
    <text evidence="2">Found in association with viral nucleoid.</text>
</comment>
<proteinExistence type="inferred from homology"/>
<sequence>MEFQNDFLTNPLRVTLYNPAENEYTKTFIFLGSVPANVLQACRKDLQRTPKDKEILQNFYGEDWEKKLSQYVVGGDSDDLDEFEKLFVEDSGEEANVMMPEIETMYSEYSIFPEDTFKDIREKIYVATGIPPYRQHIFFFQNNALQVTYRLLLSGSGVALDIRDYKKEFQQVGGLNIDASMESQKDELYVEALDSFQLIKNIHHIFVADLNTLVAPMRRQISIAIEDNYQFDLLYYGLIMKYWPLLSPDAFKLLIQSPLQMEKQYPALSPSLTSLKKRLLLEQKLINFTYAKAQQVIAKYEGNRLTRGTLAVTSAMIKISPLVNIQINVRNVFDLFPATPDIPQLVVFFYSKTGPTVVSKHHITSTEPEKFSNKTFRVPTIILIRFINKKAFILTIQNNGHYFIESNWSENERHDFNSVVSTLNNFINPIIHTINDMGPAAFPRGGSLPLPSNEDIQISISSMSVSTFWPYTLSSKGFTELKSRWREYEQAGIISVRGLQQTGVYNFLFKKGIYSYDPHEIERMIIISSGPGRKMDINVALLQNTYAYLFDTNVAARWETIYGGRNIRIYHRVTDIKIEMFNITQEEFNYLWVYLFVFLDNMISGPDKIMVNKLSQLHDKQQGKGASQLRALQEQDPDLYDLRKYDTQATVYSVLCQHPRPPVIYSEAEVKSMPPAKRKELVKYWNFTEGVPAYYSCPHPDYPHLSLLEGRHPLNYCLPCCQKTKALLGTKRFYINNTCLTKHTFVEQDLEDLNTQTSRHTLSYGKKIPVNRIAFLPHQIADELFSNTIKEPDIFCIVGVEQTMLGISNAGLFYSLARILDLAPKALAVEIAKAANTPQYYILGNGAGNMFSSGAELANLILQTFVEQKNQLLQWDTTWQDIFLDLVAICYDLHCVFFKDKQGDIEFEVSPSTIQKILSPSKKIAIIFDTDEGIYPMAMTQQKRFLKNSEAQYIFTEDDPVMEVIHSMSEFMCKDGWWDIHDVKNIPGYTVTKKFINRHNFCYALLIDSGTDRPIYFPIRLSSYIHDDIPIDFDLRPTHIAGFEETWKFISLFNKQYKQYEIIPSAVLQNIKKEFVGFLSEGKTGLYFYYAPTQTLPATLEKLPIATLTMDPRDIDQAILYPLEEPYPQQDKANKAFYINHLYKFLLIEFFDVLYGLQSNTTRKHIEDLFQKTDFQKINSVTEFYTKLSDFVDLNDIHTIKHILETTGAEHALKVLQKNVFNFDYVLLSPLQSYTYDELCQHLKKLLTPRIEFYEDIETIDRGLINIYTSCQYSTLNQPQCEKKRLRIPVNHFENYINILAADILNPLKHSTLLLTGLGVIDDLQFILRPQEIINVKNKF</sequence>
<gene>
    <name type="ordered locus">Mal-097</name>
</gene>